<proteinExistence type="inferred from homology"/>
<comment type="function">
    <text evidence="1">Small GTPase component of the coat protein complex II (COPII) which promotes the formation of transport vesicles from the endoplasmic reticulum (ER). The coat has two main functions, the physical deformation of the endoplasmic reticulum membrane into vesicles and the selection of cargo molecules. Vtr-7/sar1 controls the coat assembly in a stepwise manner. Activated sar1-GTP binds to membranes first and recruits the sec23/24 complex. These sec23/24-sar1 prebudding intermediates are then collected by the sec13/31 complex as subunits polymerize to form coated transport vesicles. Conversion to sar1-GDP triggers coat release and recycles COPII subunits (By similarity).</text>
</comment>
<comment type="catalytic activity">
    <reaction>
        <text>GTP + H2O = GDP + phosphate + H(+)</text>
        <dbReference type="Rhea" id="RHEA:19669"/>
        <dbReference type="ChEBI" id="CHEBI:15377"/>
        <dbReference type="ChEBI" id="CHEBI:15378"/>
        <dbReference type="ChEBI" id="CHEBI:37565"/>
        <dbReference type="ChEBI" id="CHEBI:43474"/>
        <dbReference type="ChEBI" id="CHEBI:58189"/>
    </reaction>
</comment>
<comment type="subunit">
    <text evidence="1">COPII is composed of at least 5 proteins: the sec23/24 complex, the sec13/31 complex and vtr-7/sar1.</text>
</comment>
<comment type="subcellular location">
    <subcellularLocation>
        <location evidence="1">Cytoplasmic vesicle</location>
        <location evidence="1">COPII-coated vesicle membrane</location>
        <topology evidence="1">Peripheral membrane protein</topology>
        <orientation evidence="1">Cytoplasmic side</orientation>
    </subcellularLocation>
    <subcellularLocation>
        <location evidence="1">Endoplasmic reticulum membrane</location>
        <topology evidence="1">Peripheral membrane protein</topology>
        <orientation evidence="1">Cytoplasmic side</orientation>
    </subcellularLocation>
    <subcellularLocation>
        <location evidence="1">Golgi apparatus membrane</location>
        <topology evidence="1">Peripheral membrane protein</topology>
        <orientation evidence="1">Cytoplasmic side</orientation>
    </subcellularLocation>
</comment>
<comment type="similarity">
    <text evidence="2">Belongs to the small GTPase superfamily. SAR1 family.</text>
</comment>
<protein>
    <recommendedName>
        <fullName>Small COPII coat GTPase sar1</fullName>
        <ecNumber>3.6.5.-</ecNumber>
    </recommendedName>
    <alternativeName>
        <fullName>Vesicle transport protein 7</fullName>
    </alternativeName>
</protein>
<feature type="chain" id="PRO_0000295520" description="Small COPII coat GTPase sar1">
    <location>
        <begin position="1"/>
        <end position="189"/>
    </location>
</feature>
<feature type="binding site" evidence="1">
    <location>
        <begin position="27"/>
        <end position="34"/>
    </location>
    <ligand>
        <name>GTP</name>
        <dbReference type="ChEBI" id="CHEBI:37565"/>
    </ligand>
</feature>
<feature type="binding site" evidence="1">
    <location>
        <begin position="70"/>
        <end position="73"/>
    </location>
    <ligand>
        <name>GTP</name>
        <dbReference type="ChEBI" id="CHEBI:37565"/>
    </ligand>
</feature>
<feature type="binding site" evidence="1">
    <location>
        <begin position="129"/>
        <end position="132"/>
    </location>
    <ligand>
        <name>GTP</name>
        <dbReference type="ChEBI" id="CHEBI:37565"/>
    </ligand>
</feature>
<gene>
    <name type="primary">vtr-7</name>
    <name type="synonym">sar1</name>
    <name type="ORF">NCU00381</name>
    <name type="ORF">NCU11181</name>
</gene>
<sequence>MWLWSWFYDILSNLGLLNKHGKLLFLGLDNAGKTTLLHMLKNDRVAILQPTLHPTSEELSVGNVKFTTFDLGGHQQARRLWKDYFPEVNGIVFLVDAKDHERLPEAKAEIDALLSMEELAKVPFVVLGNKIDHPEAVSEDELRQRLGLWQTTGKGRVPLEGIRPIEVFMCSVVMRQGYGEAIRWLSQYV</sequence>
<organism>
    <name type="scientific">Neurospora crassa (strain ATCC 24698 / 74-OR23-1A / CBS 708.71 / DSM 1257 / FGSC 987)</name>
    <dbReference type="NCBI Taxonomy" id="367110"/>
    <lineage>
        <taxon>Eukaryota</taxon>
        <taxon>Fungi</taxon>
        <taxon>Dikarya</taxon>
        <taxon>Ascomycota</taxon>
        <taxon>Pezizomycotina</taxon>
        <taxon>Sordariomycetes</taxon>
        <taxon>Sordariomycetidae</taxon>
        <taxon>Sordariales</taxon>
        <taxon>Sordariaceae</taxon>
        <taxon>Neurospora</taxon>
    </lineage>
</organism>
<evidence type="ECO:0000250" key="1"/>
<evidence type="ECO:0000305" key="2"/>
<keyword id="KW-0968">Cytoplasmic vesicle</keyword>
<keyword id="KW-0256">Endoplasmic reticulum</keyword>
<keyword id="KW-0931">ER-Golgi transport</keyword>
<keyword id="KW-0333">Golgi apparatus</keyword>
<keyword id="KW-0342">GTP-binding</keyword>
<keyword id="KW-0378">Hydrolase</keyword>
<keyword id="KW-0472">Membrane</keyword>
<keyword id="KW-0547">Nucleotide-binding</keyword>
<keyword id="KW-0653">Protein transport</keyword>
<keyword id="KW-1185">Reference proteome</keyword>
<keyword id="KW-0813">Transport</keyword>
<name>SAR1_NEUCR</name>
<accession>P0C583</accession>
<accession>A7UVU7</accession>
<accession>Q7RYS8</accession>
<dbReference type="EC" id="3.6.5.-"/>
<dbReference type="EMBL" id="CM002238">
    <property type="protein sequence ID" value="EDO65417.2"/>
    <property type="molecule type" value="Genomic_DNA"/>
</dbReference>
<dbReference type="RefSeq" id="XP_001728508.2">
    <property type="nucleotide sequence ID" value="XM_001728456.2"/>
</dbReference>
<dbReference type="SMR" id="P0C583"/>
<dbReference type="FunCoup" id="P0C583">
    <property type="interactions" value="899"/>
</dbReference>
<dbReference type="STRING" id="367110.P0C583"/>
<dbReference type="PaxDb" id="5141-EFNCRP00000000290"/>
<dbReference type="EnsemblFungi" id="EDO65417">
    <property type="protein sequence ID" value="EDO65417"/>
    <property type="gene ID" value="NCU11181"/>
</dbReference>
<dbReference type="GeneID" id="5847898"/>
<dbReference type="KEGG" id="ncr:NCU11181"/>
<dbReference type="VEuPathDB" id="FungiDB:NCU11181"/>
<dbReference type="HOGENOM" id="CLU_040729_6_0_1"/>
<dbReference type="InParanoid" id="P0C583"/>
<dbReference type="OrthoDB" id="2011769at2759"/>
<dbReference type="Proteomes" id="UP000001805">
    <property type="component" value="Chromosome 3, Linkage Group III"/>
</dbReference>
<dbReference type="GO" id="GO:0030127">
    <property type="term" value="C:COPII vesicle coat"/>
    <property type="evidence" value="ECO:0000318"/>
    <property type="project" value="GO_Central"/>
</dbReference>
<dbReference type="GO" id="GO:0070971">
    <property type="term" value="C:endoplasmic reticulum exit site"/>
    <property type="evidence" value="ECO:0000318"/>
    <property type="project" value="GO_Central"/>
</dbReference>
<dbReference type="GO" id="GO:0005789">
    <property type="term" value="C:endoplasmic reticulum membrane"/>
    <property type="evidence" value="ECO:0007669"/>
    <property type="project" value="UniProtKB-SubCell"/>
</dbReference>
<dbReference type="GO" id="GO:0000139">
    <property type="term" value="C:Golgi membrane"/>
    <property type="evidence" value="ECO:0007669"/>
    <property type="project" value="UniProtKB-SubCell"/>
</dbReference>
<dbReference type="GO" id="GO:0044233">
    <property type="term" value="C:mitochondria-associated endoplasmic reticulum membrane contact site"/>
    <property type="evidence" value="ECO:0007669"/>
    <property type="project" value="EnsemblFungi"/>
</dbReference>
<dbReference type="GO" id="GO:0005739">
    <property type="term" value="C:mitochondrion"/>
    <property type="evidence" value="ECO:0007669"/>
    <property type="project" value="GOC"/>
</dbReference>
<dbReference type="GO" id="GO:0005525">
    <property type="term" value="F:GTP binding"/>
    <property type="evidence" value="ECO:0007669"/>
    <property type="project" value="UniProtKB-KW"/>
</dbReference>
<dbReference type="GO" id="GO:0003924">
    <property type="term" value="F:GTPase activity"/>
    <property type="evidence" value="ECO:0000318"/>
    <property type="project" value="GO_Central"/>
</dbReference>
<dbReference type="GO" id="GO:0090158">
    <property type="term" value="P:endoplasmic reticulum membrane organization"/>
    <property type="evidence" value="ECO:0007669"/>
    <property type="project" value="EnsemblFungi"/>
</dbReference>
<dbReference type="GO" id="GO:0006888">
    <property type="term" value="P:endoplasmic reticulum to Golgi vesicle-mediated transport"/>
    <property type="evidence" value="ECO:0000318"/>
    <property type="project" value="GO_Central"/>
</dbReference>
<dbReference type="GO" id="GO:0006886">
    <property type="term" value="P:intracellular protein transport"/>
    <property type="evidence" value="ECO:0007669"/>
    <property type="project" value="InterPro"/>
</dbReference>
<dbReference type="GO" id="GO:0061024">
    <property type="term" value="P:membrane organization"/>
    <property type="evidence" value="ECO:0000318"/>
    <property type="project" value="GO_Central"/>
</dbReference>
<dbReference type="GO" id="GO:0000266">
    <property type="term" value="P:mitochondrial fission"/>
    <property type="evidence" value="ECO:0007669"/>
    <property type="project" value="EnsemblFungi"/>
</dbReference>
<dbReference type="GO" id="GO:0007006">
    <property type="term" value="P:mitochondrial membrane organization"/>
    <property type="evidence" value="ECO:0007669"/>
    <property type="project" value="EnsemblFungi"/>
</dbReference>
<dbReference type="GO" id="GO:0006998">
    <property type="term" value="P:nuclear envelope organization"/>
    <property type="evidence" value="ECO:0007669"/>
    <property type="project" value="EnsemblFungi"/>
</dbReference>
<dbReference type="GO" id="GO:1902953">
    <property type="term" value="P:positive regulation of ER to Golgi vesicle-mediated transport"/>
    <property type="evidence" value="ECO:0007669"/>
    <property type="project" value="EnsemblFungi"/>
</dbReference>
<dbReference type="GO" id="GO:0070863">
    <property type="term" value="P:positive regulation of protein exit from endoplasmic reticulum"/>
    <property type="evidence" value="ECO:0007669"/>
    <property type="project" value="EnsemblFungi"/>
</dbReference>
<dbReference type="GO" id="GO:0003400">
    <property type="term" value="P:regulation of COPII vesicle coating"/>
    <property type="evidence" value="ECO:0000318"/>
    <property type="project" value="GO_Central"/>
</dbReference>
<dbReference type="GO" id="GO:0016050">
    <property type="term" value="P:vesicle organization"/>
    <property type="evidence" value="ECO:0000318"/>
    <property type="project" value="GO_Central"/>
</dbReference>
<dbReference type="CDD" id="cd00879">
    <property type="entry name" value="Sar1"/>
    <property type="match status" value="1"/>
</dbReference>
<dbReference type="FunFam" id="3.40.50.300:FF:000161">
    <property type="entry name" value="Small COPII coat GTPase"/>
    <property type="match status" value="1"/>
</dbReference>
<dbReference type="Gene3D" id="3.40.50.300">
    <property type="entry name" value="P-loop containing nucleotide triphosphate hydrolases"/>
    <property type="match status" value="1"/>
</dbReference>
<dbReference type="InterPro" id="IPR027417">
    <property type="entry name" value="P-loop_NTPase"/>
</dbReference>
<dbReference type="InterPro" id="IPR005225">
    <property type="entry name" value="Small_GTP-bd"/>
</dbReference>
<dbReference type="InterPro" id="IPR006689">
    <property type="entry name" value="Small_GTPase_ARF/SAR"/>
</dbReference>
<dbReference type="InterPro" id="IPR006687">
    <property type="entry name" value="Small_GTPase_SAR1"/>
</dbReference>
<dbReference type="NCBIfam" id="TIGR00231">
    <property type="entry name" value="small_GTP"/>
    <property type="match status" value="1"/>
</dbReference>
<dbReference type="PANTHER" id="PTHR45684">
    <property type="entry name" value="RE74312P"/>
    <property type="match status" value="1"/>
</dbReference>
<dbReference type="Pfam" id="PF00025">
    <property type="entry name" value="Arf"/>
    <property type="match status" value="1"/>
</dbReference>
<dbReference type="PRINTS" id="PR00328">
    <property type="entry name" value="SAR1GTPBP"/>
</dbReference>
<dbReference type="SMART" id="SM00177">
    <property type="entry name" value="ARF"/>
    <property type="match status" value="1"/>
</dbReference>
<dbReference type="SMART" id="SM00178">
    <property type="entry name" value="SAR"/>
    <property type="match status" value="1"/>
</dbReference>
<dbReference type="SUPFAM" id="SSF52540">
    <property type="entry name" value="P-loop containing nucleoside triphosphate hydrolases"/>
    <property type="match status" value="1"/>
</dbReference>
<dbReference type="PROSITE" id="PS51422">
    <property type="entry name" value="SAR1"/>
    <property type="match status" value="1"/>
</dbReference>
<reference key="1">
    <citation type="journal article" date="2003" name="Nature">
        <title>The genome sequence of the filamentous fungus Neurospora crassa.</title>
        <authorList>
            <person name="Galagan J.E."/>
            <person name="Calvo S.E."/>
            <person name="Borkovich K.A."/>
            <person name="Selker E.U."/>
            <person name="Read N.D."/>
            <person name="Jaffe D.B."/>
            <person name="FitzHugh W."/>
            <person name="Ma L.-J."/>
            <person name="Smirnov S."/>
            <person name="Purcell S."/>
            <person name="Rehman B."/>
            <person name="Elkins T."/>
            <person name="Engels R."/>
            <person name="Wang S."/>
            <person name="Nielsen C.B."/>
            <person name="Butler J."/>
            <person name="Endrizzi M."/>
            <person name="Qui D."/>
            <person name="Ianakiev P."/>
            <person name="Bell-Pedersen D."/>
            <person name="Nelson M.A."/>
            <person name="Werner-Washburne M."/>
            <person name="Selitrennikoff C.P."/>
            <person name="Kinsey J.A."/>
            <person name="Braun E.L."/>
            <person name="Zelter A."/>
            <person name="Schulte U."/>
            <person name="Kothe G.O."/>
            <person name="Jedd G."/>
            <person name="Mewes H.-W."/>
            <person name="Staben C."/>
            <person name="Marcotte E."/>
            <person name="Greenberg D."/>
            <person name="Roy A."/>
            <person name="Foley K."/>
            <person name="Naylor J."/>
            <person name="Stange-Thomann N."/>
            <person name="Barrett R."/>
            <person name="Gnerre S."/>
            <person name="Kamal M."/>
            <person name="Kamvysselis M."/>
            <person name="Mauceli E.W."/>
            <person name="Bielke C."/>
            <person name="Rudd S."/>
            <person name="Frishman D."/>
            <person name="Krystofova S."/>
            <person name="Rasmussen C."/>
            <person name="Metzenberg R.L."/>
            <person name="Perkins D.D."/>
            <person name="Kroken S."/>
            <person name="Cogoni C."/>
            <person name="Macino G."/>
            <person name="Catcheside D.E.A."/>
            <person name="Li W."/>
            <person name="Pratt R.J."/>
            <person name="Osmani S.A."/>
            <person name="DeSouza C.P.C."/>
            <person name="Glass N.L."/>
            <person name="Orbach M.J."/>
            <person name="Berglund J.A."/>
            <person name="Voelker R."/>
            <person name="Yarden O."/>
            <person name="Plamann M."/>
            <person name="Seiler S."/>
            <person name="Dunlap J.C."/>
            <person name="Radford A."/>
            <person name="Aramayo R."/>
            <person name="Natvig D.O."/>
            <person name="Alex L.A."/>
            <person name="Mannhaupt G."/>
            <person name="Ebbole D.J."/>
            <person name="Freitag M."/>
            <person name="Paulsen I."/>
            <person name="Sachs M.S."/>
            <person name="Lander E.S."/>
            <person name="Nusbaum C."/>
            <person name="Birren B.W."/>
        </authorList>
    </citation>
    <scope>NUCLEOTIDE SEQUENCE [LARGE SCALE GENOMIC DNA]</scope>
    <source>
        <strain>ATCC 24698 / 74-OR23-1A / CBS 708.71 / DSM 1257 / FGSC 987</strain>
    </source>
</reference>